<keyword id="KW-0032">Aminotransferase</keyword>
<keyword id="KW-0663">Pyridoxal phosphate</keyword>
<keyword id="KW-0670">Pyruvate</keyword>
<keyword id="KW-0808">Transferase</keyword>
<proteinExistence type="inferred from homology"/>
<feature type="chain" id="PRO_1000144861" description="2-aminoethylphosphonate--pyruvate transaminase">
    <location>
        <begin position="1"/>
        <end position="367"/>
    </location>
</feature>
<feature type="modified residue" description="N6-(pyridoxal phosphate)lysine" evidence="1">
    <location>
        <position position="194"/>
    </location>
</feature>
<reference key="1">
    <citation type="journal article" date="2011" name="J. Bacteriol.">
        <title>Comparative genomics of 28 Salmonella enterica isolates: evidence for CRISPR-mediated adaptive sublineage evolution.</title>
        <authorList>
            <person name="Fricke W.F."/>
            <person name="Mammel M.K."/>
            <person name="McDermott P.F."/>
            <person name="Tartera C."/>
            <person name="White D.G."/>
            <person name="Leclerc J.E."/>
            <person name="Ravel J."/>
            <person name="Cebula T.A."/>
        </authorList>
    </citation>
    <scope>NUCLEOTIDE SEQUENCE [LARGE SCALE GENOMIC DNA]</scope>
    <source>
        <strain>CVM19633</strain>
    </source>
</reference>
<comment type="function">
    <text evidence="1">Involved in phosphonate degradation.</text>
</comment>
<comment type="catalytic activity">
    <reaction evidence="1">
        <text>(2-aminoethyl)phosphonate + pyruvate = phosphonoacetaldehyde + L-alanine</text>
        <dbReference type="Rhea" id="RHEA:17021"/>
        <dbReference type="ChEBI" id="CHEBI:15361"/>
        <dbReference type="ChEBI" id="CHEBI:57418"/>
        <dbReference type="ChEBI" id="CHEBI:57972"/>
        <dbReference type="ChEBI" id="CHEBI:58383"/>
        <dbReference type="EC" id="2.6.1.37"/>
    </reaction>
</comment>
<comment type="cofactor">
    <cofactor evidence="1">
        <name>pyridoxal 5'-phosphate</name>
        <dbReference type="ChEBI" id="CHEBI:597326"/>
    </cofactor>
</comment>
<comment type="subunit">
    <text evidence="1">Homodimer.</text>
</comment>
<comment type="similarity">
    <text evidence="1">Belongs to the class-V pyridoxal-phosphate-dependent aminotransferase family. PhnW subfamily.</text>
</comment>
<organism>
    <name type="scientific">Salmonella schwarzengrund (strain CVM19633)</name>
    <dbReference type="NCBI Taxonomy" id="439843"/>
    <lineage>
        <taxon>Bacteria</taxon>
        <taxon>Pseudomonadati</taxon>
        <taxon>Pseudomonadota</taxon>
        <taxon>Gammaproteobacteria</taxon>
        <taxon>Enterobacterales</taxon>
        <taxon>Enterobacteriaceae</taxon>
        <taxon>Salmonella</taxon>
    </lineage>
</organism>
<evidence type="ECO:0000255" key="1">
    <source>
        <dbReference type="HAMAP-Rule" id="MF_01376"/>
    </source>
</evidence>
<protein>
    <recommendedName>
        <fullName evidence="1">2-aminoethylphosphonate--pyruvate transaminase</fullName>
        <ecNumber evidence="1">2.6.1.37</ecNumber>
    </recommendedName>
    <alternativeName>
        <fullName evidence="1">2-aminoethylphosphonate aminotransferase</fullName>
    </alternativeName>
    <alternativeName>
        <fullName evidence="1">AEP transaminase</fullName>
        <shortName evidence="1">AEPT</shortName>
    </alternativeName>
</protein>
<gene>
    <name evidence="1" type="primary">phnW</name>
    <name type="ordered locus">SeSA_A0491</name>
</gene>
<accession>B4TMB1</accession>
<dbReference type="EC" id="2.6.1.37" evidence="1"/>
<dbReference type="EMBL" id="CP001127">
    <property type="protein sequence ID" value="ACF91527.1"/>
    <property type="molecule type" value="Genomic_DNA"/>
</dbReference>
<dbReference type="RefSeq" id="WP_000203956.1">
    <property type="nucleotide sequence ID" value="NC_011094.1"/>
</dbReference>
<dbReference type="SMR" id="B4TMB1"/>
<dbReference type="KEGG" id="sew:SeSA_A0491"/>
<dbReference type="HOGENOM" id="CLU_027686_3_1_6"/>
<dbReference type="Proteomes" id="UP000001865">
    <property type="component" value="Chromosome"/>
</dbReference>
<dbReference type="GO" id="GO:0047304">
    <property type="term" value="F:2-aminoethylphosphonate-pyruvate transaminase activity"/>
    <property type="evidence" value="ECO:0007669"/>
    <property type="project" value="UniProtKB-UniRule"/>
</dbReference>
<dbReference type="GO" id="GO:0019700">
    <property type="term" value="P:organic phosphonate catabolic process"/>
    <property type="evidence" value="ECO:0007669"/>
    <property type="project" value="InterPro"/>
</dbReference>
<dbReference type="Gene3D" id="3.90.1150.10">
    <property type="entry name" value="Aspartate Aminotransferase, domain 1"/>
    <property type="match status" value="1"/>
</dbReference>
<dbReference type="Gene3D" id="3.40.640.10">
    <property type="entry name" value="Type I PLP-dependent aspartate aminotransferase-like (Major domain)"/>
    <property type="match status" value="1"/>
</dbReference>
<dbReference type="HAMAP" id="MF_01376">
    <property type="entry name" value="PhnW_aminotrans_5"/>
    <property type="match status" value="1"/>
</dbReference>
<dbReference type="InterPro" id="IPR000192">
    <property type="entry name" value="Aminotrans_V_dom"/>
</dbReference>
<dbReference type="InterPro" id="IPR012703">
    <property type="entry name" value="NH2EtPonate_pyrv_transaminase"/>
</dbReference>
<dbReference type="InterPro" id="IPR015424">
    <property type="entry name" value="PyrdxlP-dep_Trfase"/>
</dbReference>
<dbReference type="InterPro" id="IPR015421">
    <property type="entry name" value="PyrdxlP-dep_Trfase_major"/>
</dbReference>
<dbReference type="InterPro" id="IPR015422">
    <property type="entry name" value="PyrdxlP-dep_Trfase_small"/>
</dbReference>
<dbReference type="InterPro" id="IPR024169">
    <property type="entry name" value="SP_NH2Trfase/AEP_transaminase"/>
</dbReference>
<dbReference type="NCBIfam" id="TIGR03301">
    <property type="entry name" value="PhnW-AepZ"/>
    <property type="match status" value="1"/>
</dbReference>
<dbReference type="NCBIfam" id="NF010006">
    <property type="entry name" value="PRK13479.1"/>
    <property type="match status" value="1"/>
</dbReference>
<dbReference type="NCBIfam" id="TIGR02326">
    <property type="entry name" value="transamin_PhnW"/>
    <property type="match status" value="1"/>
</dbReference>
<dbReference type="PANTHER" id="PTHR42778">
    <property type="entry name" value="2-AMINOETHYLPHOSPHONATE--PYRUVATE TRANSAMINASE"/>
    <property type="match status" value="1"/>
</dbReference>
<dbReference type="PANTHER" id="PTHR42778:SF1">
    <property type="entry name" value="2-AMINOETHYLPHOSPHONATE--PYRUVATE TRANSAMINASE"/>
    <property type="match status" value="1"/>
</dbReference>
<dbReference type="Pfam" id="PF00266">
    <property type="entry name" value="Aminotran_5"/>
    <property type="match status" value="1"/>
</dbReference>
<dbReference type="PIRSF" id="PIRSF000524">
    <property type="entry name" value="SPT"/>
    <property type="match status" value="1"/>
</dbReference>
<dbReference type="SUPFAM" id="SSF53383">
    <property type="entry name" value="PLP-dependent transferases"/>
    <property type="match status" value="1"/>
</dbReference>
<name>PHNW_SALSV</name>
<sequence length="367" mass="40269">MTSRNYLLLTPGPLTTSRTVKEAMLFDSCTWDDDYNIGVVEQIRQQLTALATASEGYTSVLLQGSGSYAVEAVLGSALGPQDKVLIVSNGAYGARMVEMAGLMGIAHHAYDCGEVARPDVQAIDAILNADPTISHIAMVHSETTTGMLNPIDEVGALAHRYGKTYIVDAMSSFGGIPMDIAALHIDYLISSANKCIQGVPGFAFVIAREQKLAACKGRSRSLSLDLYAQWRCMEDNHGKWRFTSPTHTVLAFAQALKELAEEGGVAARHQRYQQNQRSLVAGMRALGFNTLLDDELHSPIITAFYSPEDPQYRFSEFYRRLKEQGFVIYPGKVSQSDCFRIGNIGEVYAADITALLTAIRTAMYWTK</sequence>